<dbReference type="EC" id="2.8.4.3" evidence="1"/>
<dbReference type="EMBL" id="CP000884">
    <property type="protein sequence ID" value="ABX34159.1"/>
    <property type="molecule type" value="Genomic_DNA"/>
</dbReference>
<dbReference type="RefSeq" id="WP_012203445.1">
    <property type="nucleotide sequence ID" value="NC_010002.1"/>
</dbReference>
<dbReference type="SMR" id="A9BUQ1"/>
<dbReference type="STRING" id="398578.Daci_1515"/>
<dbReference type="GeneID" id="24116420"/>
<dbReference type="KEGG" id="dac:Daci_1515"/>
<dbReference type="eggNOG" id="COG0621">
    <property type="taxonomic scope" value="Bacteria"/>
</dbReference>
<dbReference type="HOGENOM" id="CLU_018697_2_0_4"/>
<dbReference type="Proteomes" id="UP000000784">
    <property type="component" value="Chromosome"/>
</dbReference>
<dbReference type="GO" id="GO:0005829">
    <property type="term" value="C:cytosol"/>
    <property type="evidence" value="ECO:0007669"/>
    <property type="project" value="TreeGrafter"/>
</dbReference>
<dbReference type="GO" id="GO:0051539">
    <property type="term" value="F:4 iron, 4 sulfur cluster binding"/>
    <property type="evidence" value="ECO:0007669"/>
    <property type="project" value="UniProtKB-UniRule"/>
</dbReference>
<dbReference type="GO" id="GO:0046872">
    <property type="term" value="F:metal ion binding"/>
    <property type="evidence" value="ECO:0007669"/>
    <property type="project" value="UniProtKB-KW"/>
</dbReference>
<dbReference type="GO" id="GO:0035597">
    <property type="term" value="F:N6-isopentenyladenosine methylthiotransferase activity"/>
    <property type="evidence" value="ECO:0007669"/>
    <property type="project" value="TreeGrafter"/>
</dbReference>
<dbReference type="CDD" id="cd01335">
    <property type="entry name" value="Radical_SAM"/>
    <property type="match status" value="1"/>
</dbReference>
<dbReference type="FunFam" id="3.40.50.12160:FF:000001">
    <property type="entry name" value="tRNA-2-methylthio-N(6)-dimethylallyladenosine synthase"/>
    <property type="match status" value="1"/>
</dbReference>
<dbReference type="FunFam" id="3.80.30.20:FF:000001">
    <property type="entry name" value="tRNA-2-methylthio-N(6)-dimethylallyladenosine synthase 2"/>
    <property type="match status" value="1"/>
</dbReference>
<dbReference type="Gene3D" id="3.40.50.12160">
    <property type="entry name" value="Methylthiotransferase, N-terminal domain"/>
    <property type="match status" value="1"/>
</dbReference>
<dbReference type="Gene3D" id="3.80.30.20">
    <property type="entry name" value="tm_1862 like domain"/>
    <property type="match status" value="1"/>
</dbReference>
<dbReference type="HAMAP" id="MF_01864">
    <property type="entry name" value="tRNA_metthiotr_MiaB"/>
    <property type="match status" value="1"/>
</dbReference>
<dbReference type="InterPro" id="IPR006638">
    <property type="entry name" value="Elp3/MiaA/NifB-like_rSAM"/>
</dbReference>
<dbReference type="InterPro" id="IPR005839">
    <property type="entry name" value="Methylthiotransferase"/>
</dbReference>
<dbReference type="InterPro" id="IPR020612">
    <property type="entry name" value="Methylthiotransferase_CS"/>
</dbReference>
<dbReference type="InterPro" id="IPR013848">
    <property type="entry name" value="Methylthiotransferase_N"/>
</dbReference>
<dbReference type="InterPro" id="IPR038135">
    <property type="entry name" value="Methylthiotransferase_N_sf"/>
</dbReference>
<dbReference type="InterPro" id="IPR006463">
    <property type="entry name" value="MiaB_methiolase"/>
</dbReference>
<dbReference type="InterPro" id="IPR007197">
    <property type="entry name" value="rSAM"/>
</dbReference>
<dbReference type="InterPro" id="IPR023404">
    <property type="entry name" value="rSAM_horseshoe"/>
</dbReference>
<dbReference type="InterPro" id="IPR002792">
    <property type="entry name" value="TRAM_dom"/>
</dbReference>
<dbReference type="NCBIfam" id="TIGR01574">
    <property type="entry name" value="miaB-methiolase"/>
    <property type="match status" value="1"/>
</dbReference>
<dbReference type="NCBIfam" id="TIGR00089">
    <property type="entry name" value="MiaB/RimO family radical SAM methylthiotransferase"/>
    <property type="match status" value="1"/>
</dbReference>
<dbReference type="PANTHER" id="PTHR43020">
    <property type="entry name" value="CDK5 REGULATORY SUBUNIT-ASSOCIATED PROTEIN 1"/>
    <property type="match status" value="1"/>
</dbReference>
<dbReference type="PANTHER" id="PTHR43020:SF2">
    <property type="entry name" value="MITOCHONDRIAL TRNA METHYLTHIOTRANSFERASE CDK5RAP1"/>
    <property type="match status" value="1"/>
</dbReference>
<dbReference type="Pfam" id="PF04055">
    <property type="entry name" value="Radical_SAM"/>
    <property type="match status" value="1"/>
</dbReference>
<dbReference type="Pfam" id="PF01938">
    <property type="entry name" value="TRAM"/>
    <property type="match status" value="1"/>
</dbReference>
<dbReference type="Pfam" id="PF00919">
    <property type="entry name" value="UPF0004"/>
    <property type="match status" value="1"/>
</dbReference>
<dbReference type="SFLD" id="SFLDF00273">
    <property type="entry name" value="(dimethylallyl)adenosine_tRNA"/>
    <property type="match status" value="1"/>
</dbReference>
<dbReference type="SFLD" id="SFLDG01082">
    <property type="entry name" value="B12-binding_domain_containing"/>
    <property type="match status" value="1"/>
</dbReference>
<dbReference type="SFLD" id="SFLDS00029">
    <property type="entry name" value="Radical_SAM"/>
    <property type="match status" value="1"/>
</dbReference>
<dbReference type="SMART" id="SM00729">
    <property type="entry name" value="Elp3"/>
    <property type="match status" value="1"/>
</dbReference>
<dbReference type="SUPFAM" id="SSF102114">
    <property type="entry name" value="Radical SAM enzymes"/>
    <property type="match status" value="1"/>
</dbReference>
<dbReference type="PROSITE" id="PS51449">
    <property type="entry name" value="MTTASE_N"/>
    <property type="match status" value="1"/>
</dbReference>
<dbReference type="PROSITE" id="PS01278">
    <property type="entry name" value="MTTASE_RADICAL"/>
    <property type="match status" value="1"/>
</dbReference>
<dbReference type="PROSITE" id="PS51918">
    <property type="entry name" value="RADICAL_SAM"/>
    <property type="match status" value="1"/>
</dbReference>
<dbReference type="PROSITE" id="PS50926">
    <property type="entry name" value="TRAM"/>
    <property type="match status" value="1"/>
</dbReference>
<sequence>MSKKVFIKTFGCQMNEYDSDKMADVLGAAQGYESTDDPEQADLILFNTCSVREKAQEKVFSDLGRYKHLKERGVLIGVGGCVASQEGEEIIKRAPYVDVVFGPQTLHRLPELLNARAAKHKPQVDISFPEIEKFDHLPPARVEGSSAFVSIMEGCSKYCSYCVVPYTRGEEVSRPFEDVLIEVAGLADQGVKEVTLLGQNVNAYLGKMGDTAEIADFALLLEYVSEIPGIERIRYTTSHPNEFTPRLIEAYARLPKLVSHLHLPVQHGSDKILMAMKRGYTAMEYKSTIRKLRAIRPEMAMSSDFIVGFPGETEEDFQKMMKLIHDVRFDNSFSFIFSPRPGTPAANLHDDTPHEVKLRRLQELQAVINNNIKDISDERVGTVQRLLVEGLSKRDGSELMGRTECNRVVNFPGNERLIGQMIDVKITEARTFTLRGEVVVRH</sequence>
<protein>
    <recommendedName>
        <fullName evidence="1">tRNA-2-methylthio-N(6)-dimethylallyladenosine synthase</fullName>
        <ecNumber evidence="1">2.8.4.3</ecNumber>
    </recommendedName>
    <alternativeName>
        <fullName evidence="1">(Dimethylallyl)adenosine tRNA methylthiotransferase MiaB</fullName>
    </alternativeName>
    <alternativeName>
        <fullName evidence="1">tRNA-i(6)A37 methylthiotransferase</fullName>
    </alternativeName>
</protein>
<proteinExistence type="inferred from homology"/>
<organism>
    <name type="scientific">Delftia acidovorans (strain DSM 14801 / SPH-1)</name>
    <dbReference type="NCBI Taxonomy" id="398578"/>
    <lineage>
        <taxon>Bacteria</taxon>
        <taxon>Pseudomonadati</taxon>
        <taxon>Pseudomonadota</taxon>
        <taxon>Betaproteobacteria</taxon>
        <taxon>Burkholderiales</taxon>
        <taxon>Comamonadaceae</taxon>
        <taxon>Delftia</taxon>
    </lineage>
</organism>
<keyword id="KW-0004">4Fe-4S</keyword>
<keyword id="KW-0963">Cytoplasm</keyword>
<keyword id="KW-0408">Iron</keyword>
<keyword id="KW-0411">Iron-sulfur</keyword>
<keyword id="KW-0479">Metal-binding</keyword>
<keyword id="KW-1185">Reference proteome</keyword>
<keyword id="KW-0949">S-adenosyl-L-methionine</keyword>
<keyword id="KW-0808">Transferase</keyword>
<keyword id="KW-0819">tRNA processing</keyword>
<accession>A9BUQ1</accession>
<name>MIAB_DELAS</name>
<gene>
    <name evidence="1" type="primary">miaB</name>
    <name type="ordered locus">Daci_1515</name>
</gene>
<comment type="function">
    <text evidence="1">Catalyzes the methylthiolation of N6-(dimethylallyl)adenosine (i(6)A), leading to the formation of 2-methylthio-N6-(dimethylallyl)adenosine (ms(2)i(6)A) at position 37 in tRNAs that read codons beginning with uridine.</text>
</comment>
<comment type="catalytic activity">
    <reaction evidence="1">
        <text>N(6)-dimethylallyladenosine(37) in tRNA + (sulfur carrier)-SH + AH2 + 2 S-adenosyl-L-methionine = 2-methylsulfanyl-N(6)-dimethylallyladenosine(37) in tRNA + (sulfur carrier)-H + 5'-deoxyadenosine + L-methionine + A + S-adenosyl-L-homocysteine + 2 H(+)</text>
        <dbReference type="Rhea" id="RHEA:37067"/>
        <dbReference type="Rhea" id="RHEA-COMP:10375"/>
        <dbReference type="Rhea" id="RHEA-COMP:10376"/>
        <dbReference type="Rhea" id="RHEA-COMP:14737"/>
        <dbReference type="Rhea" id="RHEA-COMP:14739"/>
        <dbReference type="ChEBI" id="CHEBI:13193"/>
        <dbReference type="ChEBI" id="CHEBI:15378"/>
        <dbReference type="ChEBI" id="CHEBI:17319"/>
        <dbReference type="ChEBI" id="CHEBI:17499"/>
        <dbReference type="ChEBI" id="CHEBI:29917"/>
        <dbReference type="ChEBI" id="CHEBI:57844"/>
        <dbReference type="ChEBI" id="CHEBI:57856"/>
        <dbReference type="ChEBI" id="CHEBI:59789"/>
        <dbReference type="ChEBI" id="CHEBI:64428"/>
        <dbReference type="ChEBI" id="CHEBI:74415"/>
        <dbReference type="ChEBI" id="CHEBI:74417"/>
        <dbReference type="EC" id="2.8.4.3"/>
    </reaction>
</comment>
<comment type="cofactor">
    <cofactor evidence="1">
        <name>[4Fe-4S] cluster</name>
        <dbReference type="ChEBI" id="CHEBI:49883"/>
    </cofactor>
    <text evidence="1">Binds 2 [4Fe-4S] clusters. One cluster is coordinated with 3 cysteines and an exchangeable S-adenosyl-L-methionine.</text>
</comment>
<comment type="subunit">
    <text evidence="1">Monomer.</text>
</comment>
<comment type="subcellular location">
    <subcellularLocation>
        <location evidence="1">Cytoplasm</location>
    </subcellularLocation>
</comment>
<comment type="similarity">
    <text evidence="1">Belongs to the methylthiotransferase family. MiaB subfamily.</text>
</comment>
<feature type="chain" id="PRO_0000374260" description="tRNA-2-methylthio-N(6)-dimethylallyladenosine synthase">
    <location>
        <begin position="1"/>
        <end position="442"/>
    </location>
</feature>
<feature type="domain" description="MTTase N-terminal" evidence="1">
    <location>
        <begin position="3"/>
        <end position="118"/>
    </location>
</feature>
<feature type="domain" description="Radical SAM core" evidence="2">
    <location>
        <begin position="141"/>
        <end position="374"/>
    </location>
</feature>
<feature type="domain" description="TRAM" evidence="1">
    <location>
        <begin position="377"/>
        <end position="440"/>
    </location>
</feature>
<feature type="binding site" evidence="1">
    <location>
        <position position="12"/>
    </location>
    <ligand>
        <name>[4Fe-4S] cluster</name>
        <dbReference type="ChEBI" id="CHEBI:49883"/>
        <label>1</label>
    </ligand>
</feature>
<feature type="binding site" evidence="1">
    <location>
        <position position="49"/>
    </location>
    <ligand>
        <name>[4Fe-4S] cluster</name>
        <dbReference type="ChEBI" id="CHEBI:49883"/>
        <label>1</label>
    </ligand>
</feature>
<feature type="binding site" evidence="1">
    <location>
        <position position="81"/>
    </location>
    <ligand>
        <name>[4Fe-4S] cluster</name>
        <dbReference type="ChEBI" id="CHEBI:49883"/>
        <label>1</label>
    </ligand>
</feature>
<feature type="binding site" evidence="1">
    <location>
        <position position="155"/>
    </location>
    <ligand>
        <name>[4Fe-4S] cluster</name>
        <dbReference type="ChEBI" id="CHEBI:49883"/>
        <label>2</label>
        <note>4Fe-4S-S-AdoMet</note>
    </ligand>
</feature>
<feature type="binding site" evidence="1">
    <location>
        <position position="159"/>
    </location>
    <ligand>
        <name>[4Fe-4S] cluster</name>
        <dbReference type="ChEBI" id="CHEBI:49883"/>
        <label>2</label>
        <note>4Fe-4S-S-AdoMet</note>
    </ligand>
</feature>
<feature type="binding site" evidence="1">
    <location>
        <position position="162"/>
    </location>
    <ligand>
        <name>[4Fe-4S] cluster</name>
        <dbReference type="ChEBI" id="CHEBI:49883"/>
        <label>2</label>
        <note>4Fe-4S-S-AdoMet</note>
    </ligand>
</feature>
<reference key="1">
    <citation type="submission" date="2007-11" db="EMBL/GenBank/DDBJ databases">
        <title>Complete sequence of Delftia acidovorans DSM 14801 / SPH-1.</title>
        <authorList>
            <person name="Copeland A."/>
            <person name="Lucas S."/>
            <person name="Lapidus A."/>
            <person name="Barry K."/>
            <person name="Glavina del Rio T."/>
            <person name="Dalin E."/>
            <person name="Tice H."/>
            <person name="Pitluck S."/>
            <person name="Lowry S."/>
            <person name="Clum A."/>
            <person name="Schmutz J."/>
            <person name="Larimer F."/>
            <person name="Land M."/>
            <person name="Hauser L."/>
            <person name="Kyrpides N."/>
            <person name="Kim E."/>
            <person name="Schleheck D."/>
            <person name="Richardson P."/>
        </authorList>
    </citation>
    <scope>NUCLEOTIDE SEQUENCE [LARGE SCALE GENOMIC DNA]</scope>
    <source>
        <strain>DSM 14801 / SPH-1</strain>
    </source>
</reference>
<evidence type="ECO:0000255" key="1">
    <source>
        <dbReference type="HAMAP-Rule" id="MF_01864"/>
    </source>
</evidence>
<evidence type="ECO:0000255" key="2">
    <source>
        <dbReference type="PROSITE-ProRule" id="PRU01266"/>
    </source>
</evidence>